<organism>
    <name type="scientific">Cutibacterium acnes (strain DSM 16379 / KPA171202)</name>
    <name type="common">Propionibacterium acnes</name>
    <dbReference type="NCBI Taxonomy" id="267747"/>
    <lineage>
        <taxon>Bacteria</taxon>
        <taxon>Bacillati</taxon>
        <taxon>Actinomycetota</taxon>
        <taxon>Actinomycetes</taxon>
        <taxon>Propionibacteriales</taxon>
        <taxon>Propionibacteriaceae</taxon>
        <taxon>Cutibacterium</taxon>
    </lineage>
</organism>
<comment type="function">
    <text evidence="2">GTP hydrolase that promotes the GTP-dependent binding of aminoacyl-tRNA to the A-site of ribosomes during protein biosynthesis.</text>
</comment>
<comment type="catalytic activity">
    <reaction evidence="2">
        <text>GTP + H2O = GDP + phosphate + H(+)</text>
        <dbReference type="Rhea" id="RHEA:19669"/>
        <dbReference type="ChEBI" id="CHEBI:15377"/>
        <dbReference type="ChEBI" id="CHEBI:15378"/>
        <dbReference type="ChEBI" id="CHEBI:37565"/>
        <dbReference type="ChEBI" id="CHEBI:43474"/>
        <dbReference type="ChEBI" id="CHEBI:58189"/>
        <dbReference type="EC" id="3.6.5.3"/>
    </reaction>
    <physiologicalReaction direction="left-to-right" evidence="2">
        <dbReference type="Rhea" id="RHEA:19670"/>
    </physiologicalReaction>
</comment>
<comment type="subunit">
    <text evidence="2">Monomer.</text>
</comment>
<comment type="subcellular location">
    <subcellularLocation>
        <location evidence="2">Cytoplasm</location>
    </subcellularLocation>
</comment>
<comment type="similarity">
    <text evidence="2">Belongs to the TRAFAC class translation factor GTPase superfamily. Classic translation factor GTPase family. EF-Tu/EF-1A subfamily.</text>
</comment>
<feature type="chain" id="PRO_1000015722" description="Elongation factor Tu">
    <location>
        <begin position="1"/>
        <end position="397"/>
    </location>
</feature>
<feature type="domain" description="tr-type G">
    <location>
        <begin position="10"/>
        <end position="206"/>
    </location>
</feature>
<feature type="region of interest" description="G1" evidence="1">
    <location>
        <begin position="19"/>
        <end position="26"/>
    </location>
</feature>
<feature type="region of interest" description="G2" evidence="1">
    <location>
        <begin position="62"/>
        <end position="66"/>
    </location>
</feature>
<feature type="region of interest" description="G3" evidence="1">
    <location>
        <begin position="83"/>
        <end position="86"/>
    </location>
</feature>
<feature type="region of interest" description="G4" evidence="1">
    <location>
        <begin position="138"/>
        <end position="141"/>
    </location>
</feature>
<feature type="region of interest" description="G5" evidence="1">
    <location>
        <begin position="176"/>
        <end position="178"/>
    </location>
</feature>
<feature type="binding site" evidence="2">
    <location>
        <begin position="19"/>
        <end position="26"/>
    </location>
    <ligand>
        <name>GTP</name>
        <dbReference type="ChEBI" id="CHEBI:37565"/>
    </ligand>
</feature>
<feature type="binding site" evidence="2">
    <location>
        <position position="26"/>
    </location>
    <ligand>
        <name>Mg(2+)</name>
        <dbReference type="ChEBI" id="CHEBI:18420"/>
    </ligand>
</feature>
<feature type="binding site" evidence="2">
    <location>
        <begin position="83"/>
        <end position="87"/>
    </location>
    <ligand>
        <name>GTP</name>
        <dbReference type="ChEBI" id="CHEBI:37565"/>
    </ligand>
</feature>
<feature type="binding site" evidence="2">
    <location>
        <begin position="138"/>
        <end position="141"/>
    </location>
    <ligand>
        <name>GTP</name>
        <dbReference type="ChEBI" id="CHEBI:37565"/>
    </ligand>
</feature>
<reference key="1">
    <citation type="journal article" date="2004" name="Science">
        <title>The complete genome sequence of Propionibacterium acnes, a commensal of human skin.</title>
        <authorList>
            <person name="Brueggemann H."/>
            <person name="Henne A."/>
            <person name="Hoster F."/>
            <person name="Liesegang H."/>
            <person name="Wiezer A."/>
            <person name="Strittmatter A."/>
            <person name="Hujer S."/>
            <person name="Duerre P."/>
            <person name="Gottschalk G."/>
        </authorList>
    </citation>
    <scope>NUCLEOTIDE SEQUENCE [LARGE SCALE GENOMIC DNA]</scope>
    <source>
        <strain>DSM 16379 / KPA171202</strain>
    </source>
</reference>
<evidence type="ECO:0000250" key="1"/>
<evidence type="ECO:0000255" key="2">
    <source>
        <dbReference type="HAMAP-Rule" id="MF_00118"/>
    </source>
</evidence>
<dbReference type="EC" id="3.6.5.3" evidence="2"/>
<dbReference type="EMBL" id="AE017283">
    <property type="protein sequence ID" value="AAT83596.1"/>
    <property type="molecule type" value="Genomic_DNA"/>
</dbReference>
<dbReference type="RefSeq" id="WP_002514878.1">
    <property type="nucleotide sequence ID" value="NZ_CP025935.1"/>
</dbReference>
<dbReference type="SMR" id="Q6A6L7"/>
<dbReference type="EnsemblBacteria" id="AAT83596">
    <property type="protein sequence ID" value="AAT83596"/>
    <property type="gene ID" value="PPA1873"/>
</dbReference>
<dbReference type="GeneID" id="92857818"/>
<dbReference type="KEGG" id="pac:PPA1873"/>
<dbReference type="eggNOG" id="COG0050">
    <property type="taxonomic scope" value="Bacteria"/>
</dbReference>
<dbReference type="HOGENOM" id="CLU_007265_0_1_11"/>
<dbReference type="Proteomes" id="UP000000603">
    <property type="component" value="Chromosome"/>
</dbReference>
<dbReference type="GO" id="GO:0005829">
    <property type="term" value="C:cytosol"/>
    <property type="evidence" value="ECO:0007669"/>
    <property type="project" value="TreeGrafter"/>
</dbReference>
<dbReference type="GO" id="GO:0005525">
    <property type="term" value="F:GTP binding"/>
    <property type="evidence" value="ECO:0007669"/>
    <property type="project" value="UniProtKB-UniRule"/>
</dbReference>
<dbReference type="GO" id="GO:0003924">
    <property type="term" value="F:GTPase activity"/>
    <property type="evidence" value="ECO:0007669"/>
    <property type="project" value="InterPro"/>
</dbReference>
<dbReference type="GO" id="GO:0003746">
    <property type="term" value="F:translation elongation factor activity"/>
    <property type="evidence" value="ECO:0007669"/>
    <property type="project" value="UniProtKB-UniRule"/>
</dbReference>
<dbReference type="CDD" id="cd01884">
    <property type="entry name" value="EF_Tu"/>
    <property type="match status" value="1"/>
</dbReference>
<dbReference type="CDD" id="cd03697">
    <property type="entry name" value="EFTU_II"/>
    <property type="match status" value="1"/>
</dbReference>
<dbReference type="CDD" id="cd03707">
    <property type="entry name" value="EFTU_III"/>
    <property type="match status" value="1"/>
</dbReference>
<dbReference type="FunFam" id="2.40.30.10:FF:000001">
    <property type="entry name" value="Elongation factor Tu"/>
    <property type="match status" value="1"/>
</dbReference>
<dbReference type="FunFam" id="3.40.50.300:FF:000003">
    <property type="entry name" value="Elongation factor Tu"/>
    <property type="match status" value="1"/>
</dbReference>
<dbReference type="Gene3D" id="3.40.50.300">
    <property type="entry name" value="P-loop containing nucleotide triphosphate hydrolases"/>
    <property type="match status" value="1"/>
</dbReference>
<dbReference type="Gene3D" id="2.40.30.10">
    <property type="entry name" value="Translation factors"/>
    <property type="match status" value="2"/>
</dbReference>
<dbReference type="HAMAP" id="MF_00118_B">
    <property type="entry name" value="EF_Tu_B"/>
    <property type="match status" value="1"/>
</dbReference>
<dbReference type="InterPro" id="IPR041709">
    <property type="entry name" value="EF-Tu_GTP-bd"/>
</dbReference>
<dbReference type="InterPro" id="IPR050055">
    <property type="entry name" value="EF-Tu_GTPase"/>
</dbReference>
<dbReference type="InterPro" id="IPR004161">
    <property type="entry name" value="EFTu-like_2"/>
</dbReference>
<dbReference type="InterPro" id="IPR033720">
    <property type="entry name" value="EFTU_2"/>
</dbReference>
<dbReference type="InterPro" id="IPR031157">
    <property type="entry name" value="G_TR_CS"/>
</dbReference>
<dbReference type="InterPro" id="IPR027417">
    <property type="entry name" value="P-loop_NTPase"/>
</dbReference>
<dbReference type="InterPro" id="IPR005225">
    <property type="entry name" value="Small_GTP-bd"/>
</dbReference>
<dbReference type="InterPro" id="IPR000795">
    <property type="entry name" value="T_Tr_GTP-bd_dom"/>
</dbReference>
<dbReference type="InterPro" id="IPR009000">
    <property type="entry name" value="Transl_B-barrel_sf"/>
</dbReference>
<dbReference type="InterPro" id="IPR009001">
    <property type="entry name" value="Transl_elong_EF1A/Init_IF2_C"/>
</dbReference>
<dbReference type="InterPro" id="IPR004541">
    <property type="entry name" value="Transl_elong_EFTu/EF1A_bac/org"/>
</dbReference>
<dbReference type="InterPro" id="IPR004160">
    <property type="entry name" value="Transl_elong_EFTu/EF1A_C"/>
</dbReference>
<dbReference type="NCBIfam" id="TIGR00485">
    <property type="entry name" value="EF-Tu"/>
    <property type="match status" value="1"/>
</dbReference>
<dbReference type="NCBIfam" id="NF000766">
    <property type="entry name" value="PRK00049.1"/>
    <property type="match status" value="1"/>
</dbReference>
<dbReference type="NCBIfam" id="NF009372">
    <property type="entry name" value="PRK12735.1"/>
    <property type="match status" value="1"/>
</dbReference>
<dbReference type="NCBIfam" id="NF009373">
    <property type="entry name" value="PRK12736.1"/>
    <property type="match status" value="1"/>
</dbReference>
<dbReference type="NCBIfam" id="TIGR00231">
    <property type="entry name" value="small_GTP"/>
    <property type="match status" value="1"/>
</dbReference>
<dbReference type="PANTHER" id="PTHR43721:SF22">
    <property type="entry name" value="ELONGATION FACTOR TU, MITOCHONDRIAL"/>
    <property type="match status" value="1"/>
</dbReference>
<dbReference type="PANTHER" id="PTHR43721">
    <property type="entry name" value="ELONGATION FACTOR TU-RELATED"/>
    <property type="match status" value="1"/>
</dbReference>
<dbReference type="Pfam" id="PF00009">
    <property type="entry name" value="GTP_EFTU"/>
    <property type="match status" value="1"/>
</dbReference>
<dbReference type="Pfam" id="PF03144">
    <property type="entry name" value="GTP_EFTU_D2"/>
    <property type="match status" value="1"/>
</dbReference>
<dbReference type="Pfam" id="PF03143">
    <property type="entry name" value="GTP_EFTU_D3"/>
    <property type="match status" value="1"/>
</dbReference>
<dbReference type="PRINTS" id="PR00315">
    <property type="entry name" value="ELONGATNFCT"/>
</dbReference>
<dbReference type="SUPFAM" id="SSF50465">
    <property type="entry name" value="EF-Tu/eEF-1alpha/eIF2-gamma C-terminal domain"/>
    <property type="match status" value="1"/>
</dbReference>
<dbReference type="SUPFAM" id="SSF52540">
    <property type="entry name" value="P-loop containing nucleoside triphosphate hydrolases"/>
    <property type="match status" value="1"/>
</dbReference>
<dbReference type="SUPFAM" id="SSF50447">
    <property type="entry name" value="Translation proteins"/>
    <property type="match status" value="1"/>
</dbReference>
<dbReference type="PROSITE" id="PS00301">
    <property type="entry name" value="G_TR_1"/>
    <property type="match status" value="1"/>
</dbReference>
<dbReference type="PROSITE" id="PS51722">
    <property type="entry name" value="G_TR_2"/>
    <property type="match status" value="1"/>
</dbReference>
<proteinExistence type="inferred from homology"/>
<keyword id="KW-0963">Cytoplasm</keyword>
<keyword id="KW-0251">Elongation factor</keyword>
<keyword id="KW-0342">GTP-binding</keyword>
<keyword id="KW-0378">Hydrolase</keyword>
<keyword id="KW-0460">Magnesium</keyword>
<keyword id="KW-0479">Metal-binding</keyword>
<keyword id="KW-0547">Nucleotide-binding</keyword>
<keyword id="KW-0648">Protein biosynthesis</keyword>
<gene>
    <name evidence="2" type="primary">tuf</name>
    <name type="ordered locus">PPA1873</name>
</gene>
<name>EFTU_CUTAK</name>
<protein>
    <recommendedName>
        <fullName evidence="2">Elongation factor Tu</fullName>
        <shortName evidence="2">EF-Tu</shortName>
        <ecNumber evidence="2">3.6.5.3</ecNumber>
    </recommendedName>
</protein>
<sequence>MAKAKFERTKPHCNIGTIGHIDHGKTTLTAAISKVLHDKYPELNEESPFDQIDKAPEERQRGITISIAHIEYQTEKRHYAHVDCPGHADYVKNMITGAAQMDGAILVVAATDGPMPQTREHVLLARQVGVPAIVVALNKCDMVDDEELIELVEMEVRELLTSQEFDGDNCPVVRISAFQALQGDEKWTQSILDLMDAVDEYIPQPERDLDKPFLMPIEDVFTITGRGTVVTGRVERGVVKTGEEVEIVGIHEKTQKTTVTGVEMFRKILDEGRAGENVGVLLRGTKKEDVVRGMVLSKPGSTTPHTDFEGQVYVLKKDEGGRHKPFFSHYSPQFYFRTTDVTGTVELPEGTEMVMPGDNTDMTVHLIHPVAMEDQLKFAIREGGRTVGAGRVTKIIK</sequence>
<accession>Q6A6L7</accession>